<organismHost>
    <name type="scientific">Escherichia coli</name>
    <dbReference type="NCBI Taxonomy" id="562"/>
</organismHost>
<evidence type="ECO:0000269" key="1">
    <source>
    </source>
</evidence>
<evidence type="ECO:0007829" key="2">
    <source>
        <dbReference type="PDB" id="1G31"/>
    </source>
</evidence>
<reference key="1">
    <citation type="journal article" date="1990" name="Nucleic Acids Res.">
        <title>Cloning and sequencing of bacteriophage T4 genes between map positions 128.3-130.3.</title>
        <authorList>
            <person name="Prilipov A.G."/>
            <person name="Mesyanzhinov V.V."/>
            <person name="Aebi U."/>
            <person name="Kellenberger E."/>
        </authorList>
    </citation>
    <scope>NUCLEOTIDE SEQUENCE [GENOMIC DNA]</scope>
    <source>
        <strain>D</strain>
    </source>
</reference>
<reference key="2">
    <citation type="journal article" date="1988" name="Gene">
        <title>Cloning, sequence, and expression of the temperature-dependent phage T4 capsid assembly gene 31.</title>
        <authorList>
            <person name="Nivinskas R."/>
            <person name="Black L.W."/>
        </authorList>
    </citation>
    <scope>NUCLEOTIDE SEQUENCE [GENOMIC DNA]</scope>
</reference>
<reference key="3">
    <citation type="journal article" date="1990" name="Nucleic Acids Res.">
        <title>Nucleotide sequence of bacteriophage T4 gene 31 region.</title>
        <authorList>
            <person name="Raudonikiene A."/>
            <person name="Nivinskas R."/>
        </authorList>
    </citation>
    <scope>NUCLEOTIDE SEQUENCE [GENOMIC DNA]</scope>
</reference>
<reference key="4">
    <citation type="journal article" date="1992" name="Gene">
        <title>Gene rIII is the nearest downstream neighbour of bacteriophage T4 gene 31.</title>
        <authorList>
            <person name="Raudonikiene A."/>
            <person name="Nivinskas R."/>
        </authorList>
    </citation>
    <scope>NUCLEOTIDE SEQUENCE [GENOMIC DNA]</scope>
</reference>
<reference key="5">
    <citation type="journal article" date="2003" name="Microbiol. Mol. Biol. Rev.">
        <title>Bacteriophage T4 genome.</title>
        <authorList>
            <person name="Miller E.S."/>
            <person name="Kutter E."/>
            <person name="Mosig G."/>
            <person name="Arisaka F."/>
            <person name="Kunisawa T."/>
            <person name="Ruger W."/>
        </authorList>
    </citation>
    <scope>NUCLEOTIDE SEQUENCE [LARGE SCALE GENOMIC DNA]</scope>
</reference>
<reference key="6">
    <citation type="journal article" date="1990" name="Gene">
        <title>Mutational analysis of the phage T4 morphogenetic 31 gene, whose product interacts with the Escherichia coli GroEL protein.</title>
        <authorList>
            <person name="Keppel F."/>
            <person name="Lipinska B."/>
            <person name="Ang D."/>
            <person name="Georgopoulos C."/>
        </authorList>
    </citation>
    <scope>MUTAGENESIS</scope>
</reference>
<reference key="7">
    <citation type="journal article" date="1994" name="Nature">
        <title>Bacteriophage T4 encodes a co-chaperonin that can substitute for Escherichia coli GroES in protein folding.</title>
        <authorList>
            <person name="van der Vies S.M."/>
            <person name="Gatenby A.A."/>
            <person name="Georgopoulos C."/>
        </authorList>
    </citation>
    <scope>FUNCTION</scope>
</reference>
<reference key="8">
    <citation type="journal article" date="1997" name="Cell">
        <title>Structural adaptations in the specialized bacteriophage T4 co-chaperonin Gp31 expand the size of the Anfinsen cage.</title>
        <authorList>
            <person name="Hunt J.F."/>
            <person name="van der Vies S.M."/>
            <person name="Henry L."/>
            <person name="Deisenhofer J."/>
        </authorList>
    </citation>
    <scope>X-RAY CRYSTALLOGRAPHY (2.3 ANGSTROMS)</scope>
</reference>
<comment type="function">
    <text evidence="1">Essential for proper capsid assembly. In absence of Gp31 the major capsid protein (Gp23) assembles into 'lumps'. Acts as a co-chaperonin with the host groEL protein.</text>
</comment>
<comment type="subunit">
    <text>Homoheptamer. Forms a stable complex with groEL in the presence of ATP.</text>
</comment>
<protein>
    <recommendedName>
        <fullName>Capsid assembly protein Gp31</fullName>
    </recommendedName>
</protein>
<feature type="chain" id="PRO_0000165018" description="Capsid assembly protein Gp31">
    <location>
        <begin position="1"/>
        <end position="111"/>
    </location>
</feature>
<feature type="strand" evidence="2">
    <location>
        <begin position="15"/>
        <end position="20"/>
    </location>
</feature>
<feature type="helix" evidence="2">
    <location>
        <begin position="25"/>
        <end position="27"/>
    </location>
</feature>
<feature type="helix" evidence="2">
    <location>
        <begin position="39"/>
        <end position="44"/>
    </location>
</feature>
<feature type="strand" evidence="2">
    <location>
        <begin position="45"/>
        <end position="54"/>
    </location>
</feature>
<feature type="strand" evidence="2">
    <location>
        <begin position="68"/>
        <end position="72"/>
    </location>
</feature>
<feature type="helix" evidence="2">
    <location>
        <begin position="73"/>
        <end position="75"/>
    </location>
</feature>
<feature type="strand" evidence="2">
    <location>
        <begin position="77"/>
        <end position="79"/>
    </location>
</feature>
<feature type="helix" evidence="2">
    <location>
        <begin position="82"/>
        <end position="85"/>
    </location>
</feature>
<feature type="helix" evidence="2">
    <location>
        <begin position="91"/>
        <end position="93"/>
    </location>
</feature>
<feature type="strand" evidence="2">
    <location>
        <begin position="98"/>
        <end position="102"/>
    </location>
</feature>
<feature type="helix" evidence="2">
    <location>
        <begin position="103"/>
        <end position="105"/>
    </location>
</feature>
<name>VG31_BPT4</name>
<sequence>MSEVQQLPIRAVGEYVILVSEPAQAGDEEVTESGLIIGKRVQGEVPELCVVHSVGPDVPEGFCEVGDLTSLPVGQIRNVPHPFVALGLKQPKEIKQKFVTCHYKAIPCLYK</sequence>
<gene>
    <name type="primary">31</name>
</gene>
<organism>
    <name type="scientific">Enterobacteria phage T4</name>
    <name type="common">Bacteriophage T4</name>
    <dbReference type="NCBI Taxonomy" id="10665"/>
    <lineage>
        <taxon>Viruses</taxon>
        <taxon>Duplodnaviria</taxon>
        <taxon>Heunggongvirae</taxon>
        <taxon>Uroviricota</taxon>
        <taxon>Caudoviricetes</taxon>
        <taxon>Straboviridae</taxon>
        <taxon>Tevenvirinae</taxon>
        <taxon>Tequatrovirus</taxon>
    </lineage>
</organism>
<dbReference type="EMBL" id="X17657">
    <property type="protein sequence ID" value="CAA35651.1"/>
    <property type="molecule type" value="Genomic_DNA"/>
</dbReference>
<dbReference type="EMBL" id="M37882">
    <property type="protein sequence ID" value="AAA32506.1"/>
    <property type="molecule type" value="Genomic_DNA"/>
</dbReference>
<dbReference type="EMBL" id="X54536">
    <property type="protein sequence ID" value="CAA38405.1"/>
    <property type="molecule type" value="Genomic_DNA"/>
</dbReference>
<dbReference type="EMBL" id="M34502">
    <property type="protein sequence ID" value="AAA32510.1"/>
    <property type="molecule type" value="Genomic_DNA"/>
</dbReference>
<dbReference type="EMBL" id="AF158101">
    <property type="protein sequence ID" value="AAD42451.1"/>
    <property type="molecule type" value="Genomic_DNA"/>
</dbReference>
<dbReference type="PIR" id="JT0488">
    <property type="entry name" value="VHBPP4"/>
</dbReference>
<dbReference type="RefSeq" id="NP_049825.1">
    <property type="nucleotide sequence ID" value="NC_000866.4"/>
</dbReference>
<dbReference type="PDB" id="1G31">
    <property type="method" value="X-ray"/>
    <property type="resolution" value="2.30 A"/>
    <property type="chains" value="A/B/C/D/E/F/G=1-111"/>
</dbReference>
<dbReference type="PDB" id="2CGT">
    <property type="method" value="EM"/>
    <property type="resolution" value="8.20 A"/>
    <property type="chains" value="O/P/Q/R/S/T/U=1-111"/>
</dbReference>
<dbReference type="PDBsum" id="1G31"/>
<dbReference type="PDBsum" id="2CGT"/>
<dbReference type="EMDB" id="EMD-1202"/>
<dbReference type="SMR" id="P17313"/>
<dbReference type="DIP" id="DIP-59724N"/>
<dbReference type="IntAct" id="P17313">
    <property type="interactions" value="1"/>
</dbReference>
<dbReference type="GeneID" id="1258757"/>
<dbReference type="KEGG" id="vg:1258757"/>
<dbReference type="OrthoDB" id="19822at10239"/>
<dbReference type="EvolutionaryTrace" id="P17313"/>
<dbReference type="Proteomes" id="UP000009087">
    <property type="component" value="Segment"/>
</dbReference>
<dbReference type="GO" id="GO:0005524">
    <property type="term" value="F:ATP binding"/>
    <property type="evidence" value="ECO:0007669"/>
    <property type="project" value="InterPro"/>
</dbReference>
<dbReference type="GO" id="GO:0044183">
    <property type="term" value="F:protein folding chaperone"/>
    <property type="evidence" value="ECO:0007669"/>
    <property type="project" value="InterPro"/>
</dbReference>
<dbReference type="GO" id="GO:0019069">
    <property type="term" value="P:viral capsid assembly"/>
    <property type="evidence" value="ECO:0000314"/>
    <property type="project" value="CACAO"/>
</dbReference>
<dbReference type="CDD" id="cd00320">
    <property type="entry name" value="cpn10"/>
    <property type="match status" value="1"/>
</dbReference>
<dbReference type="FunFam" id="2.30.33.40:FF:000006">
    <property type="entry name" value="Head assembly cochaperone with GroEL"/>
    <property type="match status" value="1"/>
</dbReference>
<dbReference type="Gene3D" id="2.30.33.40">
    <property type="entry name" value="GroES chaperonin"/>
    <property type="match status" value="1"/>
</dbReference>
<dbReference type="InterPro" id="IPR020818">
    <property type="entry name" value="Chaperonin_GroES"/>
</dbReference>
<dbReference type="InterPro" id="IPR037124">
    <property type="entry name" value="Chaperonin_GroES_sf"/>
</dbReference>
<dbReference type="InterPro" id="IPR011032">
    <property type="entry name" value="GroES-like_sf"/>
</dbReference>
<dbReference type="InterPro" id="IPR016416">
    <property type="entry name" value="Phage_T4_Gp31_GroEL"/>
</dbReference>
<dbReference type="Pfam" id="PF00166">
    <property type="entry name" value="Cpn10"/>
    <property type="match status" value="1"/>
</dbReference>
<dbReference type="PIRSF" id="PIRSF004380">
    <property type="entry name" value="Phage_GroES_Gp31"/>
    <property type="match status" value="1"/>
</dbReference>
<dbReference type="SUPFAM" id="SSF50129">
    <property type="entry name" value="GroES-like"/>
    <property type="match status" value="1"/>
</dbReference>
<proteinExistence type="evidence at protein level"/>
<keyword id="KW-0002">3D-structure</keyword>
<keyword id="KW-0143">Chaperone</keyword>
<keyword id="KW-0244">Early protein</keyword>
<keyword id="KW-1185">Reference proteome</keyword>
<keyword id="KW-0118">Viral capsid assembly</keyword>
<keyword id="KW-1188">Viral release from host cell</keyword>
<accession>P17313</accession>